<dbReference type="EC" id="3.5.2.9" evidence="1"/>
<dbReference type="EMBL" id="CP001182">
    <property type="protein sequence ID" value="ACJ40471.1"/>
    <property type="molecule type" value="Genomic_DNA"/>
</dbReference>
<dbReference type="RefSeq" id="WP_000496077.1">
    <property type="nucleotide sequence ID" value="NC_011586.2"/>
</dbReference>
<dbReference type="SMR" id="B7IBY8"/>
<dbReference type="KEGG" id="abn:AB57_1453"/>
<dbReference type="HOGENOM" id="CLU_069535_0_0_6"/>
<dbReference type="Proteomes" id="UP000007094">
    <property type="component" value="Chromosome"/>
</dbReference>
<dbReference type="GO" id="GO:0017168">
    <property type="term" value="F:5-oxoprolinase (ATP-hydrolyzing) activity"/>
    <property type="evidence" value="ECO:0007669"/>
    <property type="project" value="UniProtKB-UniRule"/>
</dbReference>
<dbReference type="GO" id="GO:0005524">
    <property type="term" value="F:ATP binding"/>
    <property type="evidence" value="ECO:0007669"/>
    <property type="project" value="UniProtKB-UniRule"/>
</dbReference>
<dbReference type="GO" id="GO:0005975">
    <property type="term" value="P:carbohydrate metabolic process"/>
    <property type="evidence" value="ECO:0007669"/>
    <property type="project" value="InterPro"/>
</dbReference>
<dbReference type="CDD" id="cd10787">
    <property type="entry name" value="LamB_YcsF_like"/>
    <property type="match status" value="1"/>
</dbReference>
<dbReference type="Gene3D" id="3.20.20.370">
    <property type="entry name" value="Glycoside hydrolase/deacetylase"/>
    <property type="match status" value="1"/>
</dbReference>
<dbReference type="HAMAP" id="MF_00691">
    <property type="entry name" value="PxpA"/>
    <property type="match status" value="1"/>
</dbReference>
<dbReference type="InterPro" id="IPR011330">
    <property type="entry name" value="Glyco_hydro/deAcase_b/a-brl"/>
</dbReference>
<dbReference type="InterPro" id="IPR005501">
    <property type="entry name" value="LamB/YcsF/PxpA-like"/>
</dbReference>
<dbReference type="NCBIfam" id="NF003814">
    <property type="entry name" value="PRK05406.1-3"/>
    <property type="match status" value="1"/>
</dbReference>
<dbReference type="NCBIfam" id="NF003816">
    <property type="entry name" value="PRK05406.1-5"/>
    <property type="match status" value="1"/>
</dbReference>
<dbReference type="PANTHER" id="PTHR30292:SF0">
    <property type="entry name" value="5-OXOPROLINASE SUBUNIT A"/>
    <property type="match status" value="1"/>
</dbReference>
<dbReference type="PANTHER" id="PTHR30292">
    <property type="entry name" value="UNCHARACTERIZED PROTEIN YBGL-RELATED"/>
    <property type="match status" value="1"/>
</dbReference>
<dbReference type="Pfam" id="PF03746">
    <property type="entry name" value="LamB_YcsF"/>
    <property type="match status" value="1"/>
</dbReference>
<dbReference type="SUPFAM" id="SSF88713">
    <property type="entry name" value="Glycoside hydrolase/deacetylase"/>
    <property type="match status" value="1"/>
</dbReference>
<keyword id="KW-0067">ATP-binding</keyword>
<keyword id="KW-0378">Hydrolase</keyword>
<keyword id="KW-0547">Nucleotide-binding</keyword>
<feature type="chain" id="PRO_1000132033" description="5-oxoprolinase subunit A">
    <location>
        <begin position="1"/>
        <end position="254"/>
    </location>
</feature>
<organism>
    <name type="scientific">Acinetobacter baumannii (strain AB0057)</name>
    <dbReference type="NCBI Taxonomy" id="480119"/>
    <lineage>
        <taxon>Bacteria</taxon>
        <taxon>Pseudomonadati</taxon>
        <taxon>Pseudomonadota</taxon>
        <taxon>Gammaproteobacteria</taxon>
        <taxon>Moraxellales</taxon>
        <taxon>Moraxellaceae</taxon>
        <taxon>Acinetobacter</taxon>
        <taxon>Acinetobacter calcoaceticus/baumannii complex</taxon>
    </lineage>
</organism>
<sequence length="254" mass="26963">MFVDLNSDLGESFGSWKMGNDDQILPVVTSANIACGFHAGDPLGILKTVRKAVELGVTIGAHVSYPDLVGFGRRNMDLSRDELIADVLYQISALDGLAKVAGSKVQYVKPHGALYNTIAYDQVQAAAVIDAIKMYNPELVLVALAGSNLVEQARAAGLKVVSEAFADRAYNSDGSLVSRRLEGAVLHDSAFVASRVVSMLKNGGVESIDGVFTPIQADTICLHGDTDGALEMSAAIKAELVKNNIEIRPFVNKA</sequence>
<comment type="function">
    <text evidence="1">Catalyzes the cleavage of 5-oxoproline to form L-glutamate coupled to the hydrolysis of ATP to ADP and inorganic phosphate.</text>
</comment>
<comment type="catalytic activity">
    <reaction evidence="1">
        <text>5-oxo-L-proline + ATP + 2 H2O = L-glutamate + ADP + phosphate + H(+)</text>
        <dbReference type="Rhea" id="RHEA:10348"/>
        <dbReference type="ChEBI" id="CHEBI:15377"/>
        <dbReference type="ChEBI" id="CHEBI:15378"/>
        <dbReference type="ChEBI" id="CHEBI:29985"/>
        <dbReference type="ChEBI" id="CHEBI:30616"/>
        <dbReference type="ChEBI" id="CHEBI:43474"/>
        <dbReference type="ChEBI" id="CHEBI:58402"/>
        <dbReference type="ChEBI" id="CHEBI:456216"/>
        <dbReference type="EC" id="3.5.2.9"/>
    </reaction>
</comment>
<comment type="subunit">
    <text evidence="1">Forms a complex composed of PxpA, PxpB and PxpC.</text>
</comment>
<comment type="similarity">
    <text evidence="1">Belongs to the LamB/PxpA family.</text>
</comment>
<evidence type="ECO:0000255" key="1">
    <source>
        <dbReference type="HAMAP-Rule" id="MF_00691"/>
    </source>
</evidence>
<gene>
    <name evidence="1" type="primary">pxpA</name>
    <name type="ordered locus">AB57_1453</name>
</gene>
<reference key="1">
    <citation type="journal article" date="2008" name="J. Bacteriol.">
        <title>Comparative genome sequence analysis of multidrug-resistant Acinetobacter baumannii.</title>
        <authorList>
            <person name="Adams M.D."/>
            <person name="Goglin K."/>
            <person name="Molyneaux N."/>
            <person name="Hujer K.M."/>
            <person name="Lavender H."/>
            <person name="Jamison J.J."/>
            <person name="MacDonald I.J."/>
            <person name="Martin K.M."/>
            <person name="Russo T."/>
            <person name="Campagnari A.A."/>
            <person name="Hujer A.M."/>
            <person name="Bonomo R.A."/>
            <person name="Gill S.R."/>
        </authorList>
    </citation>
    <scope>NUCLEOTIDE SEQUENCE [LARGE SCALE GENOMIC DNA]</scope>
    <source>
        <strain>AB0057</strain>
    </source>
</reference>
<protein>
    <recommendedName>
        <fullName evidence="1">5-oxoprolinase subunit A</fullName>
        <shortName evidence="1">5-OPase subunit A</shortName>
        <ecNumber evidence="1">3.5.2.9</ecNumber>
    </recommendedName>
    <alternativeName>
        <fullName evidence="1">5-oxoprolinase (ATP-hydrolyzing) subunit A</fullName>
    </alternativeName>
</protein>
<accession>B7IBY8</accession>
<name>PXPA_ACIB5</name>
<proteinExistence type="inferred from homology"/>